<accession>B3ENJ1</accession>
<sequence>MKVYKGEVNALPPDKSIAHRAALIGAVADGTTEISNFSGGFDNQSTLGVLQACGIAVHQEKLKGPNGLISRNVVIHAQGFWSLSRPEKDLMCNNSGSTMRMFAGILAAQPFESRLAGDSSLMKRPMQRVAHPLRLMGADVALSSDNTAPVAIRGTTHLRPIDYELPVPSAQVKSLVALAALHAEGESRVIETLPSRNHTELMLGLKVEALSDGRSAVIIPGRKTVPAKPFHIPGDPSAACFIIALGLLSAGSEIVVRDVCLNPTRTGYMGVLLGAGAEISMENIRFAGGEKIGDVLVRHSPSMKPLSISDPAVVANSIDEIPMLAVLSACATGAFELYNAAELRAKESDRISAVVDNLERIGFVCDEYADGFAVTGRKDVTPTGKVAIDSYDDHRIAMSFAIADRVVPMELDISDAKVIGVSFPDFFEIIESLAT</sequence>
<comment type="function">
    <text evidence="1">Catalyzes the transfer of the enolpyruvyl moiety of phosphoenolpyruvate (PEP) to the 5-hydroxyl of shikimate-3-phosphate (S3P) to produce enolpyruvyl shikimate-3-phosphate and inorganic phosphate.</text>
</comment>
<comment type="catalytic activity">
    <reaction evidence="1">
        <text>3-phosphoshikimate + phosphoenolpyruvate = 5-O-(1-carboxyvinyl)-3-phosphoshikimate + phosphate</text>
        <dbReference type="Rhea" id="RHEA:21256"/>
        <dbReference type="ChEBI" id="CHEBI:43474"/>
        <dbReference type="ChEBI" id="CHEBI:57701"/>
        <dbReference type="ChEBI" id="CHEBI:58702"/>
        <dbReference type="ChEBI" id="CHEBI:145989"/>
        <dbReference type="EC" id="2.5.1.19"/>
    </reaction>
    <physiologicalReaction direction="left-to-right" evidence="1">
        <dbReference type="Rhea" id="RHEA:21257"/>
    </physiologicalReaction>
</comment>
<comment type="pathway">
    <text evidence="1">Metabolic intermediate biosynthesis; chorismate biosynthesis; chorismate from D-erythrose 4-phosphate and phosphoenolpyruvate: step 6/7.</text>
</comment>
<comment type="subunit">
    <text evidence="1">Monomer.</text>
</comment>
<comment type="subcellular location">
    <subcellularLocation>
        <location evidence="1">Cytoplasm</location>
    </subcellularLocation>
</comment>
<comment type="similarity">
    <text evidence="1">Belongs to the EPSP synthase family.</text>
</comment>
<name>AROA_CHLPB</name>
<keyword id="KW-0028">Amino-acid biosynthesis</keyword>
<keyword id="KW-0057">Aromatic amino acid biosynthesis</keyword>
<keyword id="KW-0963">Cytoplasm</keyword>
<keyword id="KW-0808">Transferase</keyword>
<evidence type="ECO:0000255" key="1">
    <source>
        <dbReference type="HAMAP-Rule" id="MF_00210"/>
    </source>
</evidence>
<gene>
    <name evidence="1" type="primary">aroA</name>
    <name type="ordered locus">Cphamn1_2175</name>
</gene>
<proteinExistence type="inferred from homology"/>
<dbReference type="EC" id="2.5.1.19" evidence="1"/>
<dbReference type="EMBL" id="CP001101">
    <property type="protein sequence ID" value="ACE05080.1"/>
    <property type="molecule type" value="Genomic_DNA"/>
</dbReference>
<dbReference type="SMR" id="B3ENJ1"/>
<dbReference type="STRING" id="331678.Cphamn1_2175"/>
<dbReference type="KEGG" id="cpb:Cphamn1_2175"/>
<dbReference type="eggNOG" id="COG0128">
    <property type="taxonomic scope" value="Bacteria"/>
</dbReference>
<dbReference type="HOGENOM" id="CLU_024321_0_1_10"/>
<dbReference type="OrthoDB" id="9809920at2"/>
<dbReference type="UniPathway" id="UPA00053">
    <property type="reaction ID" value="UER00089"/>
</dbReference>
<dbReference type="GO" id="GO:0005737">
    <property type="term" value="C:cytoplasm"/>
    <property type="evidence" value="ECO:0007669"/>
    <property type="project" value="UniProtKB-SubCell"/>
</dbReference>
<dbReference type="GO" id="GO:0003866">
    <property type="term" value="F:3-phosphoshikimate 1-carboxyvinyltransferase activity"/>
    <property type="evidence" value="ECO:0007669"/>
    <property type="project" value="UniProtKB-UniRule"/>
</dbReference>
<dbReference type="GO" id="GO:0008652">
    <property type="term" value="P:amino acid biosynthetic process"/>
    <property type="evidence" value="ECO:0007669"/>
    <property type="project" value="UniProtKB-KW"/>
</dbReference>
<dbReference type="GO" id="GO:0009073">
    <property type="term" value="P:aromatic amino acid family biosynthetic process"/>
    <property type="evidence" value="ECO:0007669"/>
    <property type="project" value="UniProtKB-KW"/>
</dbReference>
<dbReference type="GO" id="GO:0009423">
    <property type="term" value="P:chorismate biosynthetic process"/>
    <property type="evidence" value="ECO:0007669"/>
    <property type="project" value="UniProtKB-UniRule"/>
</dbReference>
<dbReference type="CDD" id="cd01556">
    <property type="entry name" value="EPSP_synthase"/>
    <property type="match status" value="1"/>
</dbReference>
<dbReference type="FunFam" id="3.65.10.10:FF:000005">
    <property type="entry name" value="3-phosphoshikimate 1-carboxyvinyltransferase"/>
    <property type="match status" value="1"/>
</dbReference>
<dbReference type="Gene3D" id="3.65.10.10">
    <property type="entry name" value="Enolpyruvate transferase domain"/>
    <property type="match status" value="2"/>
</dbReference>
<dbReference type="HAMAP" id="MF_00210">
    <property type="entry name" value="EPSP_synth"/>
    <property type="match status" value="1"/>
</dbReference>
<dbReference type="InterPro" id="IPR001986">
    <property type="entry name" value="Enolpyruvate_Tfrase_dom"/>
</dbReference>
<dbReference type="InterPro" id="IPR036968">
    <property type="entry name" value="Enolpyruvate_Tfrase_sf"/>
</dbReference>
<dbReference type="InterPro" id="IPR006264">
    <property type="entry name" value="EPSP_synthase"/>
</dbReference>
<dbReference type="InterPro" id="IPR023193">
    <property type="entry name" value="EPSP_synthase_CS"/>
</dbReference>
<dbReference type="InterPro" id="IPR013792">
    <property type="entry name" value="RNA3'P_cycl/enolpyr_Trfase_a/b"/>
</dbReference>
<dbReference type="NCBIfam" id="TIGR01356">
    <property type="entry name" value="aroA"/>
    <property type="match status" value="1"/>
</dbReference>
<dbReference type="PANTHER" id="PTHR21090">
    <property type="entry name" value="AROM/DEHYDROQUINATE SYNTHASE"/>
    <property type="match status" value="1"/>
</dbReference>
<dbReference type="PANTHER" id="PTHR21090:SF5">
    <property type="entry name" value="PENTAFUNCTIONAL AROM POLYPEPTIDE"/>
    <property type="match status" value="1"/>
</dbReference>
<dbReference type="Pfam" id="PF00275">
    <property type="entry name" value="EPSP_synthase"/>
    <property type="match status" value="1"/>
</dbReference>
<dbReference type="PIRSF" id="PIRSF000505">
    <property type="entry name" value="EPSPS"/>
    <property type="match status" value="1"/>
</dbReference>
<dbReference type="SUPFAM" id="SSF55205">
    <property type="entry name" value="EPT/RTPC-like"/>
    <property type="match status" value="1"/>
</dbReference>
<dbReference type="PROSITE" id="PS00885">
    <property type="entry name" value="EPSP_SYNTHASE_2"/>
    <property type="match status" value="1"/>
</dbReference>
<protein>
    <recommendedName>
        <fullName evidence="1">3-phosphoshikimate 1-carboxyvinyltransferase</fullName>
        <ecNumber evidence="1">2.5.1.19</ecNumber>
    </recommendedName>
    <alternativeName>
        <fullName evidence="1">5-enolpyruvylshikimate-3-phosphate synthase</fullName>
        <shortName evidence="1">EPSP synthase</shortName>
        <shortName evidence="1">EPSPS</shortName>
    </alternativeName>
</protein>
<feature type="chain" id="PRO_1000099680" description="3-phosphoshikimate 1-carboxyvinyltransferase">
    <location>
        <begin position="1"/>
        <end position="435"/>
    </location>
</feature>
<feature type="active site" description="Proton acceptor" evidence="1">
    <location>
        <position position="319"/>
    </location>
</feature>
<feature type="binding site" evidence="1">
    <location>
        <position position="15"/>
    </location>
    <ligand>
        <name>3-phosphoshikimate</name>
        <dbReference type="ChEBI" id="CHEBI:145989"/>
    </ligand>
</feature>
<feature type="binding site" evidence="1">
    <location>
        <position position="15"/>
    </location>
    <ligand>
        <name>phosphoenolpyruvate</name>
        <dbReference type="ChEBI" id="CHEBI:58702"/>
    </ligand>
</feature>
<feature type="binding site" evidence="1">
    <location>
        <position position="16"/>
    </location>
    <ligand>
        <name>3-phosphoshikimate</name>
        <dbReference type="ChEBI" id="CHEBI:145989"/>
    </ligand>
</feature>
<feature type="binding site" evidence="1">
    <location>
        <position position="20"/>
    </location>
    <ligand>
        <name>3-phosphoshikimate</name>
        <dbReference type="ChEBI" id="CHEBI:145989"/>
    </ligand>
</feature>
<feature type="binding site" evidence="1">
    <location>
        <position position="96"/>
    </location>
    <ligand>
        <name>phosphoenolpyruvate</name>
        <dbReference type="ChEBI" id="CHEBI:58702"/>
    </ligand>
</feature>
<feature type="binding site" evidence="1">
    <location>
        <position position="124"/>
    </location>
    <ligand>
        <name>phosphoenolpyruvate</name>
        <dbReference type="ChEBI" id="CHEBI:58702"/>
    </ligand>
</feature>
<feature type="binding site" evidence="1">
    <location>
        <position position="169"/>
    </location>
    <ligand>
        <name>3-phosphoshikimate</name>
        <dbReference type="ChEBI" id="CHEBI:145989"/>
    </ligand>
</feature>
<feature type="binding site" evidence="1">
    <location>
        <position position="171"/>
    </location>
    <ligand>
        <name>3-phosphoshikimate</name>
        <dbReference type="ChEBI" id="CHEBI:145989"/>
    </ligand>
</feature>
<feature type="binding site" evidence="1">
    <location>
        <position position="171"/>
    </location>
    <ligand>
        <name>phosphoenolpyruvate</name>
        <dbReference type="ChEBI" id="CHEBI:58702"/>
    </ligand>
</feature>
<feature type="binding site" evidence="1">
    <location>
        <position position="195"/>
    </location>
    <ligand>
        <name>3-phosphoshikimate</name>
        <dbReference type="ChEBI" id="CHEBI:145989"/>
    </ligand>
</feature>
<feature type="binding site" evidence="1">
    <location>
        <position position="319"/>
    </location>
    <ligand>
        <name>3-phosphoshikimate</name>
        <dbReference type="ChEBI" id="CHEBI:145989"/>
    </ligand>
</feature>
<feature type="binding site" evidence="1">
    <location>
        <position position="346"/>
    </location>
    <ligand>
        <name>3-phosphoshikimate</name>
        <dbReference type="ChEBI" id="CHEBI:145989"/>
    </ligand>
</feature>
<feature type="binding site" evidence="1">
    <location>
        <position position="350"/>
    </location>
    <ligand>
        <name>phosphoenolpyruvate</name>
        <dbReference type="ChEBI" id="CHEBI:58702"/>
    </ligand>
</feature>
<feature type="binding site" evidence="1">
    <location>
        <position position="395"/>
    </location>
    <ligand>
        <name>phosphoenolpyruvate</name>
        <dbReference type="ChEBI" id="CHEBI:58702"/>
    </ligand>
</feature>
<reference key="1">
    <citation type="submission" date="2008-06" db="EMBL/GenBank/DDBJ databases">
        <title>Complete sequence of Chlorobium phaeobacteroides BS1.</title>
        <authorList>
            <consortium name="US DOE Joint Genome Institute"/>
            <person name="Lucas S."/>
            <person name="Copeland A."/>
            <person name="Lapidus A."/>
            <person name="Glavina del Rio T."/>
            <person name="Dalin E."/>
            <person name="Tice H."/>
            <person name="Bruce D."/>
            <person name="Goodwin L."/>
            <person name="Pitluck S."/>
            <person name="Schmutz J."/>
            <person name="Larimer F."/>
            <person name="Land M."/>
            <person name="Hauser L."/>
            <person name="Kyrpides N."/>
            <person name="Ovchinnikova G."/>
            <person name="Li T."/>
            <person name="Liu Z."/>
            <person name="Zhao F."/>
            <person name="Overmann J."/>
            <person name="Bryant D.A."/>
            <person name="Richardson P."/>
        </authorList>
    </citation>
    <scope>NUCLEOTIDE SEQUENCE [LARGE SCALE GENOMIC DNA]</scope>
    <source>
        <strain>BS1</strain>
    </source>
</reference>
<organism>
    <name type="scientific">Chlorobium phaeobacteroides (strain BS1)</name>
    <dbReference type="NCBI Taxonomy" id="331678"/>
    <lineage>
        <taxon>Bacteria</taxon>
        <taxon>Pseudomonadati</taxon>
        <taxon>Chlorobiota</taxon>
        <taxon>Chlorobiia</taxon>
        <taxon>Chlorobiales</taxon>
        <taxon>Chlorobiaceae</taxon>
        <taxon>Chlorobium/Pelodictyon group</taxon>
        <taxon>Chlorobium</taxon>
    </lineage>
</organism>